<keyword id="KW-0687">Ribonucleoprotein</keyword>
<keyword id="KW-0689">Ribosomal protein</keyword>
<comment type="similarity">
    <text evidence="1">Belongs to the bacterial ribosomal protein bL28 family.</text>
</comment>
<accession>B7NPZ8</accession>
<organism>
    <name type="scientific">Escherichia coli O7:K1 (strain IAI39 / ExPEC)</name>
    <dbReference type="NCBI Taxonomy" id="585057"/>
    <lineage>
        <taxon>Bacteria</taxon>
        <taxon>Pseudomonadati</taxon>
        <taxon>Pseudomonadota</taxon>
        <taxon>Gammaproteobacteria</taxon>
        <taxon>Enterobacterales</taxon>
        <taxon>Enterobacteriaceae</taxon>
        <taxon>Escherichia</taxon>
    </lineage>
</organism>
<sequence>MSRVCQVTGKRPVTGNNRSHALNATKRRFLPNLHSHRFWVESEKRFVTLRVSAKGMRVIDKKGIDTVLAELRARGEKY</sequence>
<proteinExistence type="inferred from homology"/>
<feature type="chain" id="PRO_1000121627" description="Large ribosomal subunit protein bL28">
    <location>
        <begin position="1"/>
        <end position="78"/>
    </location>
</feature>
<gene>
    <name evidence="1" type="primary">rpmB</name>
    <name type="ordered locus">ECIAI39_4155</name>
</gene>
<reference key="1">
    <citation type="journal article" date="2009" name="PLoS Genet.">
        <title>Organised genome dynamics in the Escherichia coli species results in highly diverse adaptive paths.</title>
        <authorList>
            <person name="Touchon M."/>
            <person name="Hoede C."/>
            <person name="Tenaillon O."/>
            <person name="Barbe V."/>
            <person name="Baeriswyl S."/>
            <person name="Bidet P."/>
            <person name="Bingen E."/>
            <person name="Bonacorsi S."/>
            <person name="Bouchier C."/>
            <person name="Bouvet O."/>
            <person name="Calteau A."/>
            <person name="Chiapello H."/>
            <person name="Clermont O."/>
            <person name="Cruveiller S."/>
            <person name="Danchin A."/>
            <person name="Diard M."/>
            <person name="Dossat C."/>
            <person name="Karoui M.E."/>
            <person name="Frapy E."/>
            <person name="Garry L."/>
            <person name="Ghigo J.M."/>
            <person name="Gilles A.M."/>
            <person name="Johnson J."/>
            <person name="Le Bouguenec C."/>
            <person name="Lescat M."/>
            <person name="Mangenot S."/>
            <person name="Martinez-Jehanne V."/>
            <person name="Matic I."/>
            <person name="Nassif X."/>
            <person name="Oztas S."/>
            <person name="Petit M.A."/>
            <person name="Pichon C."/>
            <person name="Rouy Z."/>
            <person name="Ruf C.S."/>
            <person name="Schneider D."/>
            <person name="Tourret J."/>
            <person name="Vacherie B."/>
            <person name="Vallenet D."/>
            <person name="Medigue C."/>
            <person name="Rocha E.P.C."/>
            <person name="Denamur E."/>
        </authorList>
    </citation>
    <scope>NUCLEOTIDE SEQUENCE [LARGE SCALE GENOMIC DNA]</scope>
    <source>
        <strain>IAI39 / ExPEC</strain>
    </source>
</reference>
<name>RL28_ECO7I</name>
<evidence type="ECO:0000255" key="1">
    <source>
        <dbReference type="HAMAP-Rule" id="MF_00373"/>
    </source>
</evidence>
<evidence type="ECO:0000305" key="2"/>
<protein>
    <recommendedName>
        <fullName evidence="1">Large ribosomal subunit protein bL28</fullName>
    </recommendedName>
    <alternativeName>
        <fullName evidence="2">50S ribosomal protein L28</fullName>
    </alternativeName>
</protein>
<dbReference type="EMBL" id="CU928164">
    <property type="protein sequence ID" value="CAR20263.1"/>
    <property type="molecule type" value="Genomic_DNA"/>
</dbReference>
<dbReference type="RefSeq" id="WP_000091955.1">
    <property type="nucleotide sequence ID" value="NC_011750.1"/>
</dbReference>
<dbReference type="RefSeq" id="YP_002410032.1">
    <property type="nucleotide sequence ID" value="NC_011750.1"/>
</dbReference>
<dbReference type="SMR" id="B7NPZ8"/>
<dbReference type="STRING" id="585057.ECIAI39_4155"/>
<dbReference type="GeneID" id="93778350"/>
<dbReference type="KEGG" id="ect:ECIAI39_4155"/>
<dbReference type="PATRIC" id="fig|585057.6.peg.4306"/>
<dbReference type="HOGENOM" id="CLU_064548_3_1_6"/>
<dbReference type="Proteomes" id="UP000000749">
    <property type="component" value="Chromosome"/>
</dbReference>
<dbReference type="GO" id="GO:0022625">
    <property type="term" value="C:cytosolic large ribosomal subunit"/>
    <property type="evidence" value="ECO:0007669"/>
    <property type="project" value="TreeGrafter"/>
</dbReference>
<dbReference type="GO" id="GO:0003735">
    <property type="term" value="F:structural constituent of ribosome"/>
    <property type="evidence" value="ECO:0007669"/>
    <property type="project" value="InterPro"/>
</dbReference>
<dbReference type="GO" id="GO:0006412">
    <property type="term" value="P:translation"/>
    <property type="evidence" value="ECO:0007669"/>
    <property type="project" value="UniProtKB-UniRule"/>
</dbReference>
<dbReference type="FunFam" id="2.30.170.40:FF:000001">
    <property type="entry name" value="50S ribosomal protein L28"/>
    <property type="match status" value="1"/>
</dbReference>
<dbReference type="Gene3D" id="2.30.170.40">
    <property type="entry name" value="Ribosomal protein L28/L24"/>
    <property type="match status" value="1"/>
</dbReference>
<dbReference type="HAMAP" id="MF_00373">
    <property type="entry name" value="Ribosomal_bL28"/>
    <property type="match status" value="1"/>
</dbReference>
<dbReference type="InterPro" id="IPR026569">
    <property type="entry name" value="Ribosomal_bL28"/>
</dbReference>
<dbReference type="InterPro" id="IPR034704">
    <property type="entry name" value="Ribosomal_bL28/bL31-like_sf"/>
</dbReference>
<dbReference type="InterPro" id="IPR001383">
    <property type="entry name" value="Ribosomal_bL28_bact-type"/>
</dbReference>
<dbReference type="InterPro" id="IPR037147">
    <property type="entry name" value="Ribosomal_bL28_sf"/>
</dbReference>
<dbReference type="NCBIfam" id="TIGR00009">
    <property type="entry name" value="L28"/>
    <property type="match status" value="1"/>
</dbReference>
<dbReference type="PANTHER" id="PTHR13528">
    <property type="entry name" value="39S RIBOSOMAL PROTEIN L28, MITOCHONDRIAL"/>
    <property type="match status" value="1"/>
</dbReference>
<dbReference type="PANTHER" id="PTHR13528:SF2">
    <property type="entry name" value="LARGE RIBOSOMAL SUBUNIT PROTEIN BL28M"/>
    <property type="match status" value="1"/>
</dbReference>
<dbReference type="Pfam" id="PF00830">
    <property type="entry name" value="Ribosomal_L28"/>
    <property type="match status" value="1"/>
</dbReference>
<dbReference type="SUPFAM" id="SSF143800">
    <property type="entry name" value="L28p-like"/>
    <property type="match status" value="1"/>
</dbReference>